<accession>Q4L667</accession>
<protein>
    <recommendedName>
        <fullName>Phosphatidylglycerol lysyltransferase</fullName>
        <ecNumber>2.3.2.3</ecNumber>
    </recommendedName>
    <alternativeName>
        <fullName>Lysylphosphatidylglycerol synthase</fullName>
        <shortName>LPG synthase</shortName>
    </alternativeName>
    <alternativeName>
        <fullName>Multiple peptide resistance factor</fullName>
    </alternativeName>
</protein>
<dbReference type="EC" id="2.3.2.3"/>
<dbReference type="EMBL" id="AP006716">
    <property type="protein sequence ID" value="BAE04858.1"/>
    <property type="molecule type" value="Genomic_DNA"/>
</dbReference>
<dbReference type="RefSeq" id="WP_011275840.1">
    <property type="nucleotide sequence ID" value="NC_007168.1"/>
</dbReference>
<dbReference type="SMR" id="Q4L667"/>
<dbReference type="GeneID" id="93780936"/>
<dbReference type="KEGG" id="sha:SH1549"/>
<dbReference type="eggNOG" id="COG0392">
    <property type="taxonomic scope" value="Bacteria"/>
</dbReference>
<dbReference type="eggNOG" id="COG2898">
    <property type="taxonomic scope" value="Bacteria"/>
</dbReference>
<dbReference type="HOGENOM" id="CLU_008255_7_1_9"/>
<dbReference type="OrthoDB" id="145485at2"/>
<dbReference type="Proteomes" id="UP000000543">
    <property type="component" value="Chromosome"/>
</dbReference>
<dbReference type="GO" id="GO:0005886">
    <property type="term" value="C:plasma membrane"/>
    <property type="evidence" value="ECO:0007669"/>
    <property type="project" value="UniProtKB-SubCell"/>
</dbReference>
<dbReference type="GO" id="GO:0050071">
    <property type="term" value="F:phosphatidylglycerol lysyltransferase activity"/>
    <property type="evidence" value="ECO:0007669"/>
    <property type="project" value="UniProtKB-EC"/>
</dbReference>
<dbReference type="GO" id="GO:0006629">
    <property type="term" value="P:lipid metabolic process"/>
    <property type="evidence" value="ECO:0007669"/>
    <property type="project" value="UniProtKB-KW"/>
</dbReference>
<dbReference type="GO" id="GO:0055091">
    <property type="term" value="P:phospholipid homeostasis"/>
    <property type="evidence" value="ECO:0007669"/>
    <property type="project" value="TreeGrafter"/>
</dbReference>
<dbReference type="GO" id="GO:0046677">
    <property type="term" value="P:response to antibiotic"/>
    <property type="evidence" value="ECO:0007669"/>
    <property type="project" value="UniProtKB-KW"/>
</dbReference>
<dbReference type="InterPro" id="IPR016181">
    <property type="entry name" value="Acyl_CoA_acyltransferase"/>
</dbReference>
<dbReference type="InterPro" id="IPR022791">
    <property type="entry name" value="L-PG_synthase/AglD"/>
</dbReference>
<dbReference type="InterPro" id="IPR024320">
    <property type="entry name" value="LPG_synthase_C"/>
</dbReference>
<dbReference type="InterPro" id="IPR051211">
    <property type="entry name" value="PG_lysyltransferase"/>
</dbReference>
<dbReference type="NCBIfam" id="NF033480">
    <property type="entry name" value="bifunc_MprF"/>
    <property type="match status" value="1"/>
</dbReference>
<dbReference type="PANTHER" id="PTHR34697">
    <property type="entry name" value="PHOSPHATIDYLGLYCEROL LYSYLTRANSFERASE"/>
    <property type="match status" value="1"/>
</dbReference>
<dbReference type="PANTHER" id="PTHR34697:SF2">
    <property type="entry name" value="PHOSPHATIDYLGLYCEROL LYSYLTRANSFERASE"/>
    <property type="match status" value="1"/>
</dbReference>
<dbReference type="Pfam" id="PF09924">
    <property type="entry name" value="LPG_synthase_C"/>
    <property type="match status" value="1"/>
</dbReference>
<dbReference type="Pfam" id="PF03706">
    <property type="entry name" value="LPG_synthase_TM"/>
    <property type="match status" value="1"/>
</dbReference>
<dbReference type="SUPFAM" id="SSF55729">
    <property type="entry name" value="Acyl-CoA N-acyltransferases (Nat)"/>
    <property type="match status" value="1"/>
</dbReference>
<sequence length="840" mass="96891">MTEELKNRLLSILKFVFAAVLFIAVVATLYHELAHINFKQTLEAFSKINRWYLVGLFICGGSAMILLSLYDLILVKGLKLDIPLIRVFKISYIINALNAIVGFGGFIGAGFRAFIYKNYTTDRKKLVHAISIILISMLMGLSLLSILVVLHIFDASHIINKVSWVRWILYVVALFLPLFIAYTMINPIDRNNKYLGVYCTLVSSFEWLAAATVLYLSTVIVDINIAFTTVIGIFIIAALSGLVSFIPGGFGAFDLVVLLGLKSLGVPEEKVLLALLLYRFAYYFVPVIIALILSTFEFGSSARKYFEESKYFVPARDVTSFLFSYQKDIIAKIPSFALATLVLITSFVFFINNITIVYDGLYDDHHFAYYIMLSVHTSACLLLLINVRGVFKQSRRAILFVMISLVLIFSATIYTYASLILLSWILLIFILLILAYRRSKVMKRPFRLKRLIFTIILSMLVLYVNHFIISETLYALDIYHIEMDTSLLKYYFWLTILVVVILVGIVAWLLGSRYTRPHQLEDLSRCKSIIETYGGNYLSHLIYSGDKDVFMHEAQQAFLMYRYKGNALVVLGDPIGDTKAFQSLLIDFYNYGEKLGYDIIFYQVSDRFMPLYHNFGNQFFKLGEEAIIDLTQFTTSGKKRRGFRATLNKFDDLNIQFEILEPPFSKDLIFQLKQVSNQWLDGRNEMHFSVGQFTEEYLQQAPIGIMKNEEGKVIAFCTLMPTYYNEAISVDLIRWLPDLDLPLMDGLYLHMLLWGKDKGYKAFNMGMATLSNVGQLNYSYPRERVAGRVFEHFNGLYRFQGLRKYKEKYSPNWEPRFLVYRKDSSLWYSMLKVMRVIRHK</sequence>
<evidence type="ECO:0000250" key="1"/>
<evidence type="ECO:0000255" key="2"/>
<evidence type="ECO:0000305" key="3"/>
<feature type="chain" id="PRO_0000096568" description="Phosphatidylglycerol lysyltransferase">
    <location>
        <begin position="1"/>
        <end position="840"/>
    </location>
</feature>
<feature type="topological domain" description="Cytoplasmic" evidence="2">
    <location>
        <begin position="1"/>
        <end position="8"/>
    </location>
</feature>
<feature type="transmembrane region" description="Helical" evidence="2">
    <location>
        <begin position="9"/>
        <end position="29"/>
    </location>
</feature>
<feature type="topological domain" description="Extracellular" evidence="2">
    <location>
        <begin position="30"/>
        <end position="52"/>
    </location>
</feature>
<feature type="transmembrane region" description="Helical" evidence="2">
    <location>
        <begin position="53"/>
        <end position="73"/>
    </location>
</feature>
<feature type="topological domain" description="Cytoplasmic" evidence="2">
    <location>
        <begin position="74"/>
        <end position="89"/>
    </location>
</feature>
<feature type="transmembrane region" description="Helical" evidence="2">
    <location>
        <begin position="90"/>
        <end position="110"/>
    </location>
</feature>
<feature type="topological domain" description="Extracellular" evidence="2">
    <location>
        <begin position="111"/>
        <end position="129"/>
    </location>
</feature>
<feature type="transmembrane region" description="Helical" evidence="2">
    <location>
        <begin position="130"/>
        <end position="150"/>
    </location>
</feature>
<feature type="topological domain" description="Cytoplasmic" evidence="2">
    <location>
        <begin position="151"/>
        <end position="167"/>
    </location>
</feature>
<feature type="transmembrane region" description="Helical" evidence="2">
    <location>
        <begin position="168"/>
        <end position="188"/>
    </location>
</feature>
<feature type="topological domain" description="Extracellular" evidence="2">
    <location>
        <begin position="189"/>
        <end position="193"/>
    </location>
</feature>
<feature type="transmembrane region" description="Helical" evidence="2">
    <location>
        <begin position="194"/>
        <end position="216"/>
    </location>
</feature>
<feature type="topological domain" description="Cytoplasmic" evidence="2">
    <location>
        <begin position="217"/>
        <end position="229"/>
    </location>
</feature>
<feature type="transmembrane region" description="Helical" evidence="2">
    <location>
        <begin position="230"/>
        <end position="250"/>
    </location>
</feature>
<feature type="topological domain" description="Extracellular" evidence="2">
    <location>
        <begin position="251"/>
        <end position="271"/>
    </location>
</feature>
<feature type="transmembrane region" description="Helical" evidence="2">
    <location>
        <begin position="272"/>
        <end position="292"/>
    </location>
</feature>
<feature type="topological domain" description="Cytoplasmic" evidence="2">
    <location>
        <begin position="293"/>
        <end position="335"/>
    </location>
</feature>
<feature type="transmembrane region" description="Helical" evidence="2">
    <location>
        <begin position="336"/>
        <end position="356"/>
    </location>
</feature>
<feature type="topological domain" description="Extracellular" evidence="2">
    <location>
        <begin position="357"/>
        <end position="366"/>
    </location>
</feature>
<feature type="transmembrane region" description="Helical" evidence="2">
    <location>
        <begin position="367"/>
        <end position="387"/>
    </location>
</feature>
<feature type="topological domain" description="Cytoplasmic" evidence="2">
    <location>
        <begin position="388"/>
        <end position="394"/>
    </location>
</feature>
<feature type="transmembrane region" description="Helical" evidence="2">
    <location>
        <begin position="395"/>
        <end position="415"/>
    </location>
</feature>
<feature type="transmembrane region" description="Helical" evidence="2">
    <location>
        <begin position="416"/>
        <end position="436"/>
    </location>
</feature>
<feature type="topological domain" description="Cytoplasmic" evidence="2">
    <location>
        <begin position="437"/>
        <end position="450"/>
    </location>
</feature>
<feature type="transmembrane region" description="Helical" evidence="2">
    <location>
        <begin position="451"/>
        <end position="471"/>
    </location>
</feature>
<feature type="topological domain" description="Extracellular" evidence="2">
    <location>
        <begin position="472"/>
        <end position="490"/>
    </location>
</feature>
<feature type="transmembrane region" description="Helical" evidence="2">
    <location>
        <begin position="491"/>
        <end position="511"/>
    </location>
</feature>
<feature type="topological domain" description="Cytoplasmic" evidence="2">
    <location>
        <begin position="512"/>
        <end position="840"/>
    </location>
</feature>
<comment type="function">
    <text evidence="1">Catalyzes the transfer of a lysyl group from L-lysyl-tRNA(Lys) to membrane-bound phosphatidylglycerol (PG), which produces lysylphosphatidylglycerol (LPG), a major component of the bacterial membrane with a positive net charge. LPG synthesis contributes to bacterial virulence as it is involved in the resistance mechanism against cationic antimicrobial peptides (CAMP) produces by the host's immune system (defensins, cathelicidins) and by the competing microorganisms (bacteriocins). In fact, the modification of anionic phosphatidylglycerol with positively charged L-lysine results in repulsion of the peptides (By similarity).</text>
</comment>
<comment type="catalytic activity">
    <reaction>
        <text>L-lysyl-tRNA(Lys) + a 1,2-diacyl-sn-glycero-3-phospho-(1'-sn-glycerol) = a 1,2-diacyl-sn-glycero-3-phospho-1'-(3'-O-L-lysyl)-sn-glycerol + tRNA(Lys)</text>
        <dbReference type="Rhea" id="RHEA:10668"/>
        <dbReference type="Rhea" id="RHEA-COMP:9696"/>
        <dbReference type="Rhea" id="RHEA-COMP:9697"/>
        <dbReference type="ChEBI" id="CHEBI:64716"/>
        <dbReference type="ChEBI" id="CHEBI:75792"/>
        <dbReference type="ChEBI" id="CHEBI:78442"/>
        <dbReference type="ChEBI" id="CHEBI:78529"/>
        <dbReference type="EC" id="2.3.2.3"/>
    </reaction>
</comment>
<comment type="subcellular location">
    <subcellularLocation>
        <location>Cell membrane</location>
        <topology>Multi-pass membrane protein</topology>
    </subcellularLocation>
</comment>
<comment type="similarity">
    <text evidence="3">Belongs to the LPG synthase family.</text>
</comment>
<gene>
    <name type="primary">mprF</name>
    <name type="synonym">fmtC</name>
    <name type="ordered locus">SH1549</name>
</gene>
<reference key="1">
    <citation type="journal article" date="2005" name="J. Bacteriol.">
        <title>Whole-genome sequencing of Staphylococcus haemolyticus uncovers the extreme plasticity of its genome and the evolution of human-colonizing staphylococcal species.</title>
        <authorList>
            <person name="Takeuchi F."/>
            <person name="Watanabe S."/>
            <person name="Baba T."/>
            <person name="Yuzawa H."/>
            <person name="Ito T."/>
            <person name="Morimoto Y."/>
            <person name="Kuroda M."/>
            <person name="Cui L."/>
            <person name="Takahashi M."/>
            <person name="Ankai A."/>
            <person name="Baba S."/>
            <person name="Fukui S."/>
            <person name="Lee J.C."/>
            <person name="Hiramatsu K."/>
        </authorList>
    </citation>
    <scope>NUCLEOTIDE SEQUENCE [LARGE SCALE GENOMIC DNA]</scope>
    <source>
        <strain>JCSC1435</strain>
    </source>
</reference>
<keyword id="KW-0046">Antibiotic resistance</keyword>
<keyword id="KW-1003">Cell membrane</keyword>
<keyword id="KW-0443">Lipid metabolism</keyword>
<keyword id="KW-0472">Membrane</keyword>
<keyword id="KW-0808">Transferase</keyword>
<keyword id="KW-0812">Transmembrane</keyword>
<keyword id="KW-1133">Transmembrane helix</keyword>
<keyword id="KW-0843">Virulence</keyword>
<name>MPRF_STAHJ</name>
<organism>
    <name type="scientific">Staphylococcus haemolyticus (strain JCSC1435)</name>
    <dbReference type="NCBI Taxonomy" id="279808"/>
    <lineage>
        <taxon>Bacteria</taxon>
        <taxon>Bacillati</taxon>
        <taxon>Bacillota</taxon>
        <taxon>Bacilli</taxon>
        <taxon>Bacillales</taxon>
        <taxon>Staphylococcaceae</taxon>
        <taxon>Staphylococcus</taxon>
    </lineage>
</organism>
<proteinExistence type="inferred from homology"/>